<name>UPPP_ENT38</name>
<dbReference type="EC" id="3.6.1.27" evidence="1"/>
<dbReference type="EMBL" id="CP000653">
    <property type="protein sequence ID" value="ABP62119.1"/>
    <property type="molecule type" value="Genomic_DNA"/>
</dbReference>
<dbReference type="RefSeq" id="WP_015960447.1">
    <property type="nucleotide sequence ID" value="NC_009436.1"/>
</dbReference>
<dbReference type="SMR" id="A4WEI9"/>
<dbReference type="STRING" id="399742.Ent638_3460"/>
<dbReference type="GeneID" id="93306426"/>
<dbReference type="KEGG" id="ent:Ent638_3460"/>
<dbReference type="eggNOG" id="COG1968">
    <property type="taxonomic scope" value="Bacteria"/>
</dbReference>
<dbReference type="HOGENOM" id="CLU_060296_2_0_6"/>
<dbReference type="OrthoDB" id="9808289at2"/>
<dbReference type="Proteomes" id="UP000000230">
    <property type="component" value="Chromosome"/>
</dbReference>
<dbReference type="GO" id="GO:0005886">
    <property type="term" value="C:plasma membrane"/>
    <property type="evidence" value="ECO:0007669"/>
    <property type="project" value="UniProtKB-SubCell"/>
</dbReference>
<dbReference type="GO" id="GO:0050380">
    <property type="term" value="F:undecaprenyl-diphosphatase activity"/>
    <property type="evidence" value="ECO:0007669"/>
    <property type="project" value="UniProtKB-UniRule"/>
</dbReference>
<dbReference type="GO" id="GO:0071555">
    <property type="term" value="P:cell wall organization"/>
    <property type="evidence" value="ECO:0007669"/>
    <property type="project" value="UniProtKB-KW"/>
</dbReference>
<dbReference type="GO" id="GO:0009252">
    <property type="term" value="P:peptidoglycan biosynthetic process"/>
    <property type="evidence" value="ECO:0007669"/>
    <property type="project" value="UniProtKB-KW"/>
</dbReference>
<dbReference type="GO" id="GO:0008360">
    <property type="term" value="P:regulation of cell shape"/>
    <property type="evidence" value="ECO:0007669"/>
    <property type="project" value="UniProtKB-KW"/>
</dbReference>
<dbReference type="GO" id="GO:0046677">
    <property type="term" value="P:response to antibiotic"/>
    <property type="evidence" value="ECO:0007669"/>
    <property type="project" value="UniProtKB-UniRule"/>
</dbReference>
<dbReference type="HAMAP" id="MF_01006">
    <property type="entry name" value="Undec_diphosphatase"/>
    <property type="match status" value="1"/>
</dbReference>
<dbReference type="InterPro" id="IPR003824">
    <property type="entry name" value="UppP"/>
</dbReference>
<dbReference type="NCBIfam" id="NF001388">
    <property type="entry name" value="PRK00281.1-1"/>
    <property type="match status" value="1"/>
</dbReference>
<dbReference type="NCBIfam" id="NF001389">
    <property type="entry name" value="PRK00281.1-2"/>
    <property type="match status" value="1"/>
</dbReference>
<dbReference type="NCBIfam" id="NF001390">
    <property type="entry name" value="PRK00281.1-4"/>
    <property type="match status" value="1"/>
</dbReference>
<dbReference type="NCBIfam" id="TIGR00753">
    <property type="entry name" value="undec_PP_bacA"/>
    <property type="match status" value="1"/>
</dbReference>
<dbReference type="PANTHER" id="PTHR30622">
    <property type="entry name" value="UNDECAPRENYL-DIPHOSPHATASE"/>
    <property type="match status" value="1"/>
</dbReference>
<dbReference type="PANTHER" id="PTHR30622:SF3">
    <property type="entry name" value="UNDECAPRENYL-DIPHOSPHATASE"/>
    <property type="match status" value="1"/>
</dbReference>
<dbReference type="Pfam" id="PF02673">
    <property type="entry name" value="BacA"/>
    <property type="match status" value="1"/>
</dbReference>
<feature type="chain" id="PRO_1000062798" description="Undecaprenyl-diphosphatase">
    <location>
        <begin position="1"/>
        <end position="273"/>
    </location>
</feature>
<feature type="transmembrane region" description="Helical" evidence="1">
    <location>
        <begin position="45"/>
        <end position="65"/>
    </location>
</feature>
<feature type="transmembrane region" description="Helical" evidence="1">
    <location>
        <begin position="90"/>
        <end position="110"/>
    </location>
</feature>
<feature type="transmembrane region" description="Helical" evidence="1">
    <location>
        <begin position="116"/>
        <end position="136"/>
    </location>
</feature>
<feature type="transmembrane region" description="Helical" evidence="1">
    <location>
        <begin position="154"/>
        <end position="173"/>
    </location>
</feature>
<feature type="transmembrane region" description="Helical" evidence="1">
    <location>
        <begin position="190"/>
        <end position="210"/>
    </location>
</feature>
<feature type="transmembrane region" description="Helical" evidence="1">
    <location>
        <begin position="222"/>
        <end position="242"/>
    </location>
</feature>
<feature type="transmembrane region" description="Helical" evidence="1">
    <location>
        <begin position="252"/>
        <end position="272"/>
    </location>
</feature>
<organism>
    <name type="scientific">Enterobacter sp. (strain 638)</name>
    <dbReference type="NCBI Taxonomy" id="399742"/>
    <lineage>
        <taxon>Bacteria</taxon>
        <taxon>Pseudomonadati</taxon>
        <taxon>Pseudomonadota</taxon>
        <taxon>Gammaproteobacteria</taxon>
        <taxon>Enterobacterales</taxon>
        <taxon>Enterobacteriaceae</taxon>
        <taxon>Enterobacter</taxon>
    </lineage>
</organism>
<protein>
    <recommendedName>
        <fullName evidence="1">Undecaprenyl-diphosphatase</fullName>
        <ecNumber evidence="1">3.6.1.27</ecNumber>
    </recommendedName>
    <alternativeName>
        <fullName evidence="1">Bacitracin resistance protein</fullName>
    </alternativeName>
    <alternativeName>
        <fullName evidence="1">Undecaprenyl pyrophosphate phosphatase</fullName>
    </alternativeName>
</protein>
<proteinExistence type="inferred from homology"/>
<accession>A4WEI9</accession>
<comment type="function">
    <text evidence="1">Catalyzes the dephosphorylation of undecaprenyl diphosphate (UPP). Confers resistance to bacitracin.</text>
</comment>
<comment type="catalytic activity">
    <reaction evidence="1">
        <text>di-trans,octa-cis-undecaprenyl diphosphate + H2O = di-trans,octa-cis-undecaprenyl phosphate + phosphate + H(+)</text>
        <dbReference type="Rhea" id="RHEA:28094"/>
        <dbReference type="ChEBI" id="CHEBI:15377"/>
        <dbReference type="ChEBI" id="CHEBI:15378"/>
        <dbReference type="ChEBI" id="CHEBI:43474"/>
        <dbReference type="ChEBI" id="CHEBI:58405"/>
        <dbReference type="ChEBI" id="CHEBI:60392"/>
        <dbReference type="EC" id="3.6.1.27"/>
    </reaction>
</comment>
<comment type="subcellular location">
    <subcellularLocation>
        <location evidence="1">Cell inner membrane</location>
        <topology evidence="1">Multi-pass membrane protein</topology>
    </subcellularLocation>
</comment>
<comment type="miscellaneous">
    <text>Bacitracin is thought to be involved in the inhibition of peptidoglycan synthesis by sequestering undecaprenyl diphosphate, thereby reducing the pool of lipid carrier available.</text>
</comment>
<comment type="similarity">
    <text evidence="1">Belongs to the UppP family.</text>
</comment>
<keyword id="KW-0046">Antibiotic resistance</keyword>
<keyword id="KW-0997">Cell inner membrane</keyword>
<keyword id="KW-1003">Cell membrane</keyword>
<keyword id="KW-0133">Cell shape</keyword>
<keyword id="KW-0961">Cell wall biogenesis/degradation</keyword>
<keyword id="KW-0378">Hydrolase</keyword>
<keyword id="KW-0472">Membrane</keyword>
<keyword id="KW-0573">Peptidoglycan synthesis</keyword>
<keyword id="KW-0812">Transmembrane</keyword>
<keyword id="KW-1133">Transmembrane helix</keyword>
<evidence type="ECO:0000255" key="1">
    <source>
        <dbReference type="HAMAP-Rule" id="MF_01006"/>
    </source>
</evidence>
<gene>
    <name evidence="1" type="primary">uppP</name>
    <name type="ordered locus">Ent638_3460</name>
</gene>
<reference key="1">
    <citation type="journal article" date="2010" name="PLoS Genet.">
        <title>Genome sequence of the plant growth promoting endophytic bacterium Enterobacter sp. 638.</title>
        <authorList>
            <person name="Taghavi S."/>
            <person name="van der Lelie D."/>
            <person name="Hoffman A."/>
            <person name="Zhang Y.B."/>
            <person name="Walla M.D."/>
            <person name="Vangronsveld J."/>
            <person name="Newman L."/>
            <person name="Monchy S."/>
        </authorList>
    </citation>
    <scope>NUCLEOTIDE SEQUENCE [LARGE SCALE GENOMIC DNA]</scope>
    <source>
        <strain>638</strain>
    </source>
</reference>
<sequence>MSDMHSLLVAAILGVVEGLTEFLPVSSTGHMIIVGHLLGFEGETAKTFEVVIQLGSILAVVVMFWRRLFGLIGIHFGRPPQHEGEGKGRLTLIHILLGMVPAVVLGLIFHDAIKSLFNPINVMYALVVGGVLLIAAELLKPKEPKAPGLDDMTYRQAFMIGCFQCLALWPGFSRSGATISGGMLMGVSRYAASEFSFLLAVPMMMGATALDLYKSYHFLTAADFPMFAVGFVTAFLVALVAIKTFLQLIKRISFIPFAIYRFIVAAAVYVVFF</sequence>